<sequence>MDAVAAEPVVAPVLPLPAQVRDLGMQDYAPVWRAMQRFTDTRDEHTGDELWVVEHTPVFTLGQAGKPEHVLAPGEIPVLQVDRGGQVTYHGPGQLVVYPLLDLRRLKIGVRDYVCKIEQALIDTLDEWNIVAERRDGAPGVYVGGAKIAALGIRVRRGCTFHGLSFNVAMDLEPFHRINPCGYQDLQVTSVLDLGGPSGMDAVKAVLLDQLARQFGLVLQPTSALPDLSLPA</sequence>
<evidence type="ECO:0000255" key="1">
    <source>
        <dbReference type="HAMAP-Rule" id="MF_00013"/>
    </source>
</evidence>
<evidence type="ECO:0000255" key="2">
    <source>
        <dbReference type="PROSITE-ProRule" id="PRU01067"/>
    </source>
</evidence>
<dbReference type="EC" id="2.3.1.181" evidence="1"/>
<dbReference type="EMBL" id="AE008922">
    <property type="protein sequence ID" value="AAM42722.1"/>
    <property type="molecule type" value="Genomic_DNA"/>
</dbReference>
<dbReference type="RefSeq" id="NP_638798.1">
    <property type="nucleotide sequence ID" value="NC_003902.1"/>
</dbReference>
<dbReference type="RefSeq" id="WP_011038550.1">
    <property type="nucleotide sequence ID" value="NC_003902.1"/>
</dbReference>
<dbReference type="SMR" id="Q8P589"/>
<dbReference type="STRING" id="190485.XCC3452"/>
<dbReference type="EnsemblBacteria" id="AAM42722">
    <property type="protein sequence ID" value="AAM42722"/>
    <property type="gene ID" value="XCC3452"/>
</dbReference>
<dbReference type="KEGG" id="xcc:XCC3452"/>
<dbReference type="PATRIC" id="fig|190485.4.peg.3691"/>
<dbReference type="eggNOG" id="COG0321">
    <property type="taxonomic scope" value="Bacteria"/>
</dbReference>
<dbReference type="HOGENOM" id="CLU_035168_3_1_6"/>
<dbReference type="OrthoDB" id="9787061at2"/>
<dbReference type="UniPathway" id="UPA00538">
    <property type="reaction ID" value="UER00592"/>
</dbReference>
<dbReference type="Proteomes" id="UP000001010">
    <property type="component" value="Chromosome"/>
</dbReference>
<dbReference type="GO" id="GO:0005737">
    <property type="term" value="C:cytoplasm"/>
    <property type="evidence" value="ECO:0007669"/>
    <property type="project" value="UniProtKB-SubCell"/>
</dbReference>
<dbReference type="GO" id="GO:0033819">
    <property type="term" value="F:lipoyl(octanoyl) transferase activity"/>
    <property type="evidence" value="ECO:0000318"/>
    <property type="project" value="GO_Central"/>
</dbReference>
<dbReference type="GO" id="GO:0036211">
    <property type="term" value="P:protein modification process"/>
    <property type="evidence" value="ECO:0007669"/>
    <property type="project" value="InterPro"/>
</dbReference>
<dbReference type="CDD" id="cd16444">
    <property type="entry name" value="LipB"/>
    <property type="match status" value="1"/>
</dbReference>
<dbReference type="FunFam" id="3.30.930.10:FF:000020">
    <property type="entry name" value="Octanoyltransferase"/>
    <property type="match status" value="1"/>
</dbReference>
<dbReference type="Gene3D" id="3.30.930.10">
    <property type="entry name" value="Bira Bifunctional Protein, Domain 2"/>
    <property type="match status" value="1"/>
</dbReference>
<dbReference type="HAMAP" id="MF_00013">
    <property type="entry name" value="LipB"/>
    <property type="match status" value="1"/>
</dbReference>
<dbReference type="InterPro" id="IPR045864">
    <property type="entry name" value="aa-tRNA-synth_II/BPL/LPL"/>
</dbReference>
<dbReference type="InterPro" id="IPR004143">
    <property type="entry name" value="BPL_LPL_catalytic"/>
</dbReference>
<dbReference type="InterPro" id="IPR000544">
    <property type="entry name" value="Octanoyltransferase"/>
</dbReference>
<dbReference type="InterPro" id="IPR020605">
    <property type="entry name" value="Octanoyltransferase_CS"/>
</dbReference>
<dbReference type="NCBIfam" id="TIGR00214">
    <property type="entry name" value="lipB"/>
    <property type="match status" value="1"/>
</dbReference>
<dbReference type="NCBIfam" id="NF010922">
    <property type="entry name" value="PRK14342.1"/>
    <property type="match status" value="1"/>
</dbReference>
<dbReference type="NCBIfam" id="NF010925">
    <property type="entry name" value="PRK14345.1"/>
    <property type="match status" value="1"/>
</dbReference>
<dbReference type="PANTHER" id="PTHR10993:SF7">
    <property type="entry name" value="LIPOYLTRANSFERASE 2, MITOCHONDRIAL-RELATED"/>
    <property type="match status" value="1"/>
</dbReference>
<dbReference type="PANTHER" id="PTHR10993">
    <property type="entry name" value="OCTANOYLTRANSFERASE"/>
    <property type="match status" value="1"/>
</dbReference>
<dbReference type="Pfam" id="PF21948">
    <property type="entry name" value="LplA-B_cat"/>
    <property type="match status" value="1"/>
</dbReference>
<dbReference type="PIRSF" id="PIRSF016262">
    <property type="entry name" value="LPLase"/>
    <property type="match status" value="1"/>
</dbReference>
<dbReference type="SUPFAM" id="SSF55681">
    <property type="entry name" value="Class II aaRS and biotin synthetases"/>
    <property type="match status" value="1"/>
</dbReference>
<dbReference type="PROSITE" id="PS51733">
    <property type="entry name" value="BPL_LPL_CATALYTIC"/>
    <property type="match status" value="1"/>
</dbReference>
<dbReference type="PROSITE" id="PS01313">
    <property type="entry name" value="LIPB"/>
    <property type="match status" value="1"/>
</dbReference>
<reference key="1">
    <citation type="journal article" date="2002" name="Nature">
        <title>Comparison of the genomes of two Xanthomonas pathogens with differing host specificities.</title>
        <authorList>
            <person name="da Silva A.C.R."/>
            <person name="Ferro J.A."/>
            <person name="Reinach F.C."/>
            <person name="Farah C.S."/>
            <person name="Furlan L.R."/>
            <person name="Quaggio R.B."/>
            <person name="Monteiro-Vitorello C.B."/>
            <person name="Van Sluys M.A."/>
            <person name="Almeida N.F. Jr."/>
            <person name="Alves L.M.C."/>
            <person name="do Amaral A.M."/>
            <person name="Bertolini M.C."/>
            <person name="Camargo L.E.A."/>
            <person name="Camarotte G."/>
            <person name="Cannavan F."/>
            <person name="Cardozo J."/>
            <person name="Chambergo F."/>
            <person name="Ciapina L.P."/>
            <person name="Cicarelli R.M.B."/>
            <person name="Coutinho L.L."/>
            <person name="Cursino-Santos J.R."/>
            <person name="El-Dorry H."/>
            <person name="Faria J.B."/>
            <person name="Ferreira A.J.S."/>
            <person name="Ferreira R.C.C."/>
            <person name="Ferro M.I.T."/>
            <person name="Formighieri E.F."/>
            <person name="Franco M.C."/>
            <person name="Greggio C.C."/>
            <person name="Gruber A."/>
            <person name="Katsuyama A.M."/>
            <person name="Kishi L.T."/>
            <person name="Leite R.P."/>
            <person name="Lemos E.G.M."/>
            <person name="Lemos M.V.F."/>
            <person name="Locali E.C."/>
            <person name="Machado M.A."/>
            <person name="Madeira A.M.B.N."/>
            <person name="Martinez-Rossi N.M."/>
            <person name="Martins E.C."/>
            <person name="Meidanis J."/>
            <person name="Menck C.F.M."/>
            <person name="Miyaki C.Y."/>
            <person name="Moon D.H."/>
            <person name="Moreira L.M."/>
            <person name="Novo M.T.M."/>
            <person name="Okura V.K."/>
            <person name="Oliveira M.C."/>
            <person name="Oliveira V.R."/>
            <person name="Pereira H.A."/>
            <person name="Rossi A."/>
            <person name="Sena J.A.D."/>
            <person name="Silva C."/>
            <person name="de Souza R.F."/>
            <person name="Spinola L.A.F."/>
            <person name="Takita M.A."/>
            <person name="Tamura R.E."/>
            <person name="Teixeira E.C."/>
            <person name="Tezza R.I.D."/>
            <person name="Trindade dos Santos M."/>
            <person name="Truffi D."/>
            <person name="Tsai S.M."/>
            <person name="White F.F."/>
            <person name="Setubal J.C."/>
            <person name="Kitajima J.P."/>
        </authorList>
    </citation>
    <scope>NUCLEOTIDE SEQUENCE [LARGE SCALE GENOMIC DNA]</scope>
    <source>
        <strain>ATCC 33913 / DSM 3586 / NCPPB 528 / LMG 568 / P 25</strain>
    </source>
</reference>
<comment type="function">
    <text evidence="1">Catalyzes the transfer of endogenously produced octanoic acid from octanoyl-acyl-carrier-protein onto the lipoyl domains of lipoate-dependent enzymes. Lipoyl-ACP can also act as a substrate although octanoyl-ACP is likely to be the physiological substrate.</text>
</comment>
<comment type="catalytic activity">
    <reaction evidence="1">
        <text>octanoyl-[ACP] + L-lysyl-[protein] = N(6)-octanoyl-L-lysyl-[protein] + holo-[ACP] + H(+)</text>
        <dbReference type="Rhea" id="RHEA:17665"/>
        <dbReference type="Rhea" id="RHEA-COMP:9636"/>
        <dbReference type="Rhea" id="RHEA-COMP:9685"/>
        <dbReference type="Rhea" id="RHEA-COMP:9752"/>
        <dbReference type="Rhea" id="RHEA-COMP:9928"/>
        <dbReference type="ChEBI" id="CHEBI:15378"/>
        <dbReference type="ChEBI" id="CHEBI:29969"/>
        <dbReference type="ChEBI" id="CHEBI:64479"/>
        <dbReference type="ChEBI" id="CHEBI:78463"/>
        <dbReference type="ChEBI" id="CHEBI:78809"/>
        <dbReference type="EC" id="2.3.1.181"/>
    </reaction>
</comment>
<comment type="pathway">
    <text evidence="1">Protein modification; protein lipoylation via endogenous pathway; protein N(6)-(lipoyl)lysine from octanoyl-[acyl-carrier-protein]: step 1/2.</text>
</comment>
<comment type="subcellular location">
    <subcellularLocation>
        <location evidence="1">Cytoplasm</location>
    </subcellularLocation>
</comment>
<comment type="miscellaneous">
    <text evidence="1">In the reaction, the free carboxyl group of octanoic acid is attached via an amide linkage to the epsilon-amino group of a specific lysine residue of lipoyl domains of lipoate-dependent enzymes.</text>
</comment>
<comment type="similarity">
    <text evidence="1">Belongs to the LipB family.</text>
</comment>
<gene>
    <name evidence="1" type="primary">lipB</name>
    <name type="ordered locus">XCC3452</name>
</gene>
<protein>
    <recommendedName>
        <fullName evidence="1">Octanoyltransferase</fullName>
        <ecNumber evidence="1">2.3.1.181</ecNumber>
    </recommendedName>
    <alternativeName>
        <fullName evidence="1">Lipoate-protein ligase B</fullName>
    </alternativeName>
    <alternativeName>
        <fullName evidence="1">Lipoyl/octanoyl transferase</fullName>
    </alternativeName>
    <alternativeName>
        <fullName evidence="1">Octanoyl-[acyl-carrier-protein]-protein N-octanoyltransferase</fullName>
    </alternativeName>
</protein>
<proteinExistence type="inferred from homology"/>
<name>LIPB_XANCP</name>
<accession>Q8P589</accession>
<keyword id="KW-0012">Acyltransferase</keyword>
<keyword id="KW-0963">Cytoplasm</keyword>
<keyword id="KW-1185">Reference proteome</keyword>
<keyword id="KW-0808">Transferase</keyword>
<feature type="chain" id="PRO_0000062897" description="Octanoyltransferase">
    <location>
        <begin position="1"/>
        <end position="232"/>
    </location>
</feature>
<feature type="domain" description="BPL/LPL catalytic" evidence="2">
    <location>
        <begin position="44"/>
        <end position="219"/>
    </location>
</feature>
<feature type="active site" description="Acyl-thioester intermediate" evidence="1">
    <location>
        <position position="181"/>
    </location>
</feature>
<feature type="binding site" evidence="1">
    <location>
        <begin position="83"/>
        <end position="90"/>
    </location>
    <ligand>
        <name>substrate</name>
    </ligand>
</feature>
<feature type="binding site" evidence="1">
    <location>
        <begin position="150"/>
        <end position="152"/>
    </location>
    <ligand>
        <name>substrate</name>
    </ligand>
</feature>
<feature type="binding site" evidence="1">
    <location>
        <begin position="163"/>
        <end position="165"/>
    </location>
    <ligand>
        <name>substrate</name>
    </ligand>
</feature>
<feature type="site" description="Lowers pKa of active site Cys" evidence="1">
    <location>
        <position position="147"/>
    </location>
</feature>
<organism>
    <name type="scientific">Xanthomonas campestris pv. campestris (strain ATCC 33913 / DSM 3586 / NCPPB 528 / LMG 568 / P 25)</name>
    <dbReference type="NCBI Taxonomy" id="190485"/>
    <lineage>
        <taxon>Bacteria</taxon>
        <taxon>Pseudomonadati</taxon>
        <taxon>Pseudomonadota</taxon>
        <taxon>Gammaproteobacteria</taxon>
        <taxon>Lysobacterales</taxon>
        <taxon>Lysobacteraceae</taxon>
        <taxon>Xanthomonas</taxon>
    </lineage>
</organism>